<organism>
    <name type="scientific">Prochlorococcus marinus (strain MIT 9312)</name>
    <dbReference type="NCBI Taxonomy" id="74546"/>
    <lineage>
        <taxon>Bacteria</taxon>
        <taxon>Bacillati</taxon>
        <taxon>Cyanobacteriota</taxon>
        <taxon>Cyanophyceae</taxon>
        <taxon>Synechococcales</taxon>
        <taxon>Prochlorococcaceae</taxon>
        <taxon>Prochlorococcus</taxon>
    </lineage>
</organism>
<proteinExistence type="inferred from homology"/>
<accession>Q31C66</accession>
<gene>
    <name evidence="1" type="primary">psaJ</name>
    <name type="ordered locus">PMT9312_0468</name>
</gene>
<feature type="chain" id="PRO_0000268758" description="Photosystem I reaction center subunit IX">
    <location>
        <begin position="1"/>
        <end position="44"/>
    </location>
</feature>
<feature type="transmembrane region" description="Helical" evidence="1">
    <location>
        <begin position="9"/>
        <end position="29"/>
    </location>
</feature>
<comment type="function">
    <text evidence="1">May help in the organization of the PsaE and PsaF subunits.</text>
</comment>
<comment type="subcellular location">
    <subcellularLocation>
        <location evidence="1">Cellular thylakoid membrane</location>
        <topology evidence="1">Single-pass membrane protein</topology>
    </subcellularLocation>
</comment>
<comment type="similarity">
    <text evidence="1">Belongs to the PsaJ family.</text>
</comment>
<name>PSAJ_PROM9</name>
<protein>
    <recommendedName>
        <fullName evidence="1">Photosystem I reaction center subunit IX</fullName>
    </recommendedName>
</protein>
<dbReference type="EMBL" id="CP000111">
    <property type="protein sequence ID" value="ABB49529.1"/>
    <property type="molecule type" value="Genomic_DNA"/>
</dbReference>
<dbReference type="RefSeq" id="WP_011376028.1">
    <property type="nucleotide sequence ID" value="NC_007577.1"/>
</dbReference>
<dbReference type="SMR" id="Q31C66"/>
<dbReference type="STRING" id="74546.PMT9312_0468"/>
<dbReference type="KEGG" id="pmi:PMT9312_0468"/>
<dbReference type="eggNOG" id="ENOG5033A5A">
    <property type="taxonomic scope" value="Bacteria"/>
</dbReference>
<dbReference type="HOGENOM" id="CLU_212133_1_1_3"/>
<dbReference type="OrthoDB" id="532702at2"/>
<dbReference type="Proteomes" id="UP000002715">
    <property type="component" value="Chromosome"/>
</dbReference>
<dbReference type="GO" id="GO:0009522">
    <property type="term" value="C:photosystem I"/>
    <property type="evidence" value="ECO:0007669"/>
    <property type="project" value="UniProtKB-KW"/>
</dbReference>
<dbReference type="GO" id="GO:0031676">
    <property type="term" value="C:plasma membrane-derived thylakoid membrane"/>
    <property type="evidence" value="ECO:0007669"/>
    <property type="project" value="UniProtKB-SubCell"/>
</dbReference>
<dbReference type="GO" id="GO:0015979">
    <property type="term" value="P:photosynthesis"/>
    <property type="evidence" value="ECO:0007669"/>
    <property type="project" value="UniProtKB-UniRule"/>
</dbReference>
<dbReference type="Gene3D" id="1.20.5.510">
    <property type="entry name" value="Single helix bin"/>
    <property type="match status" value="1"/>
</dbReference>
<dbReference type="HAMAP" id="MF_00522">
    <property type="entry name" value="PSI_PsaJ"/>
    <property type="match status" value="1"/>
</dbReference>
<dbReference type="InterPro" id="IPR002615">
    <property type="entry name" value="PSI_PsaJ"/>
</dbReference>
<dbReference type="InterPro" id="IPR036062">
    <property type="entry name" value="PSI_PsaJ_sf"/>
</dbReference>
<dbReference type="NCBIfam" id="NF002743">
    <property type="entry name" value="PRK02733.1"/>
    <property type="match status" value="1"/>
</dbReference>
<dbReference type="PANTHER" id="PTHR36082">
    <property type="match status" value="1"/>
</dbReference>
<dbReference type="PANTHER" id="PTHR36082:SF2">
    <property type="entry name" value="PHOTOSYSTEM I REACTION CENTER SUBUNIT IX"/>
    <property type="match status" value="1"/>
</dbReference>
<dbReference type="Pfam" id="PF01701">
    <property type="entry name" value="PSI_PsaJ"/>
    <property type="match status" value="1"/>
</dbReference>
<dbReference type="SUPFAM" id="SSF81544">
    <property type="entry name" value="Subunit IX of photosystem I reaction centre, PsaJ"/>
    <property type="match status" value="1"/>
</dbReference>
<reference key="1">
    <citation type="journal article" date="2006" name="Science">
        <title>Genomic islands and the ecology and evolution of Prochlorococcus.</title>
        <authorList>
            <person name="Coleman M.L."/>
            <person name="Sullivan M.B."/>
            <person name="Martiny A.C."/>
            <person name="Steglich C."/>
            <person name="Barry K."/>
            <person name="Delong E.F."/>
            <person name="Chisholm S.W."/>
        </authorList>
    </citation>
    <scope>NUCLEOTIDE SEQUENCE [LARGE SCALE GENOMIC DNA]</scope>
    <source>
        <strain>MIT 9312</strain>
    </source>
</reference>
<keyword id="KW-0472">Membrane</keyword>
<keyword id="KW-0602">Photosynthesis</keyword>
<keyword id="KW-0603">Photosystem I</keyword>
<keyword id="KW-0793">Thylakoid</keyword>
<keyword id="KW-0812">Transmembrane</keyword>
<keyword id="KW-1133">Transmembrane helix</keyword>
<sequence length="44" mass="5098">MFKLFSTKYMRSAPVVAAAWITMTAGIIIEFNRFFPDLLFHPMS</sequence>
<evidence type="ECO:0000255" key="1">
    <source>
        <dbReference type="HAMAP-Rule" id="MF_00522"/>
    </source>
</evidence>